<name>RL7_ALIB4</name>
<reference key="1">
    <citation type="journal article" date="2007" name="PLoS ONE">
        <title>The complete genome sequence and analysis of the Epsilonproteobacterium Arcobacter butzleri.</title>
        <authorList>
            <person name="Miller W.G."/>
            <person name="Parker C.T."/>
            <person name="Rubenfield M."/>
            <person name="Mendz G.L."/>
            <person name="Woesten M.M.S.M."/>
            <person name="Ussery D.W."/>
            <person name="Stolz J.F."/>
            <person name="Binnewies T.T."/>
            <person name="Hallin P.F."/>
            <person name="Wang G."/>
            <person name="Malek J.A."/>
            <person name="Rogosin A."/>
            <person name="Stanker L.H."/>
            <person name="Mandrell R.E."/>
        </authorList>
    </citation>
    <scope>NUCLEOTIDE SEQUENCE [LARGE SCALE GENOMIC DNA]</scope>
    <source>
        <strain>RM4018</strain>
    </source>
</reference>
<evidence type="ECO:0000255" key="1">
    <source>
        <dbReference type="HAMAP-Rule" id="MF_00368"/>
    </source>
</evidence>
<evidence type="ECO:0000305" key="2"/>
<feature type="chain" id="PRO_1000059921" description="Large ribosomal subunit protein bL12">
    <location>
        <begin position="1"/>
        <end position="123"/>
    </location>
</feature>
<gene>
    <name evidence="1" type="primary">rplL</name>
    <name type="ordered locus">Abu_1885</name>
</gene>
<comment type="function">
    <text evidence="1">Forms part of the ribosomal stalk which helps the ribosome interact with GTP-bound translation factors. Is thus essential for accurate translation.</text>
</comment>
<comment type="subunit">
    <text evidence="1">Homodimer. Part of the ribosomal stalk of the 50S ribosomal subunit. Forms a multimeric L10(L12)X complex, where L10 forms an elongated spine to which 2 to 4 L12 dimers bind in a sequential fashion. Binds GTP-bound translation factors.</text>
</comment>
<comment type="similarity">
    <text evidence="1">Belongs to the bacterial ribosomal protein bL12 family.</text>
</comment>
<protein>
    <recommendedName>
        <fullName evidence="1">Large ribosomal subunit protein bL12</fullName>
    </recommendedName>
    <alternativeName>
        <fullName evidence="2">50S ribosomal protein L7/L12</fullName>
    </alternativeName>
</protein>
<organism>
    <name type="scientific">Aliarcobacter butzleri (strain RM4018)</name>
    <name type="common">Arcobacter butzleri</name>
    <dbReference type="NCBI Taxonomy" id="367737"/>
    <lineage>
        <taxon>Bacteria</taxon>
        <taxon>Pseudomonadati</taxon>
        <taxon>Campylobacterota</taxon>
        <taxon>Epsilonproteobacteria</taxon>
        <taxon>Campylobacterales</taxon>
        <taxon>Arcobacteraceae</taxon>
        <taxon>Aliarcobacter</taxon>
    </lineage>
</organism>
<dbReference type="EMBL" id="CP000361">
    <property type="protein sequence ID" value="ABV68118.1"/>
    <property type="molecule type" value="Genomic_DNA"/>
</dbReference>
<dbReference type="RefSeq" id="WP_004511255.1">
    <property type="nucleotide sequence ID" value="NC_009850.1"/>
</dbReference>
<dbReference type="SMR" id="A8EVZ5"/>
<dbReference type="STRING" id="367737.Abu_1885"/>
<dbReference type="GeneID" id="24304369"/>
<dbReference type="KEGG" id="abu:Abu_1885"/>
<dbReference type="eggNOG" id="COG0222">
    <property type="taxonomic scope" value="Bacteria"/>
</dbReference>
<dbReference type="HOGENOM" id="CLU_086499_3_0_7"/>
<dbReference type="Proteomes" id="UP000001136">
    <property type="component" value="Chromosome"/>
</dbReference>
<dbReference type="GO" id="GO:0022625">
    <property type="term" value="C:cytosolic large ribosomal subunit"/>
    <property type="evidence" value="ECO:0007669"/>
    <property type="project" value="TreeGrafter"/>
</dbReference>
<dbReference type="GO" id="GO:0003729">
    <property type="term" value="F:mRNA binding"/>
    <property type="evidence" value="ECO:0007669"/>
    <property type="project" value="TreeGrafter"/>
</dbReference>
<dbReference type="GO" id="GO:0003735">
    <property type="term" value="F:structural constituent of ribosome"/>
    <property type="evidence" value="ECO:0007669"/>
    <property type="project" value="InterPro"/>
</dbReference>
<dbReference type="GO" id="GO:0006412">
    <property type="term" value="P:translation"/>
    <property type="evidence" value="ECO:0007669"/>
    <property type="project" value="UniProtKB-UniRule"/>
</dbReference>
<dbReference type="CDD" id="cd00387">
    <property type="entry name" value="Ribosomal_L7_L12"/>
    <property type="match status" value="1"/>
</dbReference>
<dbReference type="FunFam" id="3.30.1390.10:FF:000001">
    <property type="entry name" value="50S ribosomal protein L7/L12"/>
    <property type="match status" value="1"/>
</dbReference>
<dbReference type="Gene3D" id="3.30.1390.10">
    <property type="match status" value="1"/>
</dbReference>
<dbReference type="Gene3D" id="1.20.5.710">
    <property type="entry name" value="Single helix bin"/>
    <property type="match status" value="1"/>
</dbReference>
<dbReference type="HAMAP" id="MF_00368">
    <property type="entry name" value="Ribosomal_bL12"/>
    <property type="match status" value="1"/>
</dbReference>
<dbReference type="InterPro" id="IPR000206">
    <property type="entry name" value="Ribosomal_bL12"/>
</dbReference>
<dbReference type="InterPro" id="IPR013823">
    <property type="entry name" value="Ribosomal_bL12_C"/>
</dbReference>
<dbReference type="InterPro" id="IPR014719">
    <property type="entry name" value="Ribosomal_bL12_C/ClpS-like"/>
</dbReference>
<dbReference type="InterPro" id="IPR008932">
    <property type="entry name" value="Ribosomal_bL12_oligo"/>
</dbReference>
<dbReference type="InterPro" id="IPR036235">
    <property type="entry name" value="Ribosomal_bL12_oligo_N_sf"/>
</dbReference>
<dbReference type="NCBIfam" id="TIGR00855">
    <property type="entry name" value="L12"/>
    <property type="match status" value="1"/>
</dbReference>
<dbReference type="PANTHER" id="PTHR45987">
    <property type="entry name" value="39S RIBOSOMAL PROTEIN L12"/>
    <property type="match status" value="1"/>
</dbReference>
<dbReference type="PANTHER" id="PTHR45987:SF4">
    <property type="entry name" value="LARGE RIBOSOMAL SUBUNIT PROTEIN BL12M"/>
    <property type="match status" value="1"/>
</dbReference>
<dbReference type="Pfam" id="PF00542">
    <property type="entry name" value="Ribosomal_L12"/>
    <property type="match status" value="1"/>
</dbReference>
<dbReference type="Pfam" id="PF16320">
    <property type="entry name" value="Ribosomal_L12_N"/>
    <property type="match status" value="1"/>
</dbReference>
<dbReference type="SUPFAM" id="SSF54736">
    <property type="entry name" value="ClpS-like"/>
    <property type="match status" value="1"/>
</dbReference>
<dbReference type="SUPFAM" id="SSF48300">
    <property type="entry name" value="Ribosomal protein L7/12, oligomerisation (N-terminal) domain"/>
    <property type="match status" value="1"/>
</dbReference>
<accession>A8EVZ5</accession>
<sequence>MAVSKEDVLEFISGLSVLELSELVKEFEEKFGVSAQPVAVAGGAVAAVEAVEEKTEFDVIIVDSGDKKINVIKEIRAITGLGLKEAKDAAEQTPSTIKEGISKADAEAFKAQLEAAGAKVEVK</sequence>
<keyword id="KW-1185">Reference proteome</keyword>
<keyword id="KW-0687">Ribonucleoprotein</keyword>
<keyword id="KW-0689">Ribosomal protein</keyword>
<proteinExistence type="inferred from homology"/>